<gene>
    <name evidence="1" type="primary">pfkA</name>
    <name type="ordered locus">VP2855</name>
</gene>
<feature type="chain" id="PRO_0000112006" description="ATP-dependent 6-phosphofructokinase">
    <location>
        <begin position="1"/>
        <end position="320"/>
    </location>
</feature>
<feature type="active site" description="Proton acceptor" evidence="1">
    <location>
        <position position="128"/>
    </location>
</feature>
<feature type="binding site" evidence="1">
    <location>
        <position position="12"/>
    </location>
    <ligand>
        <name>ATP</name>
        <dbReference type="ChEBI" id="CHEBI:30616"/>
    </ligand>
</feature>
<feature type="binding site" evidence="1">
    <location>
        <begin position="22"/>
        <end position="26"/>
    </location>
    <ligand>
        <name>ADP</name>
        <dbReference type="ChEBI" id="CHEBI:456216"/>
        <note>allosteric activator; ligand shared between dimeric partners</note>
    </ligand>
</feature>
<feature type="binding site" evidence="1">
    <location>
        <begin position="73"/>
        <end position="74"/>
    </location>
    <ligand>
        <name>ATP</name>
        <dbReference type="ChEBI" id="CHEBI:30616"/>
    </ligand>
</feature>
<feature type="binding site" evidence="1">
    <location>
        <begin position="103"/>
        <end position="106"/>
    </location>
    <ligand>
        <name>ATP</name>
        <dbReference type="ChEBI" id="CHEBI:30616"/>
    </ligand>
</feature>
<feature type="binding site" evidence="1">
    <location>
        <position position="104"/>
    </location>
    <ligand>
        <name>Mg(2+)</name>
        <dbReference type="ChEBI" id="CHEBI:18420"/>
        <note>catalytic</note>
    </ligand>
</feature>
<feature type="binding site" description="in other chain" evidence="1">
    <location>
        <begin position="126"/>
        <end position="128"/>
    </location>
    <ligand>
        <name>substrate</name>
        <note>ligand shared between dimeric partners</note>
    </ligand>
</feature>
<feature type="binding site" description="in other chain" evidence="1">
    <location>
        <position position="155"/>
    </location>
    <ligand>
        <name>ADP</name>
        <dbReference type="ChEBI" id="CHEBI:456216"/>
        <note>allosteric activator; ligand shared between dimeric partners</note>
    </ligand>
</feature>
<feature type="binding site" evidence="1">
    <location>
        <position position="163"/>
    </location>
    <ligand>
        <name>substrate</name>
        <note>ligand shared between dimeric partners</note>
    </ligand>
</feature>
<feature type="binding site" description="in other chain" evidence="1">
    <location>
        <begin position="170"/>
        <end position="172"/>
    </location>
    <ligand>
        <name>substrate</name>
        <note>ligand shared between dimeric partners</note>
    </ligand>
</feature>
<feature type="binding site" description="in other chain" evidence="1">
    <location>
        <begin position="186"/>
        <end position="188"/>
    </location>
    <ligand>
        <name>ADP</name>
        <dbReference type="ChEBI" id="CHEBI:456216"/>
        <note>allosteric activator; ligand shared between dimeric partners</note>
    </ligand>
</feature>
<feature type="binding site" description="in other chain" evidence="1">
    <location>
        <position position="212"/>
    </location>
    <ligand>
        <name>ADP</name>
        <dbReference type="ChEBI" id="CHEBI:456216"/>
        <note>allosteric activator; ligand shared between dimeric partners</note>
    </ligand>
</feature>
<feature type="binding site" description="in other chain" evidence="1">
    <location>
        <begin position="214"/>
        <end position="216"/>
    </location>
    <ligand>
        <name>ADP</name>
        <dbReference type="ChEBI" id="CHEBI:456216"/>
        <note>allosteric activator; ligand shared between dimeric partners</note>
    </ligand>
</feature>
<feature type="binding site" description="in other chain" evidence="1">
    <location>
        <position position="223"/>
    </location>
    <ligand>
        <name>substrate</name>
        <note>ligand shared between dimeric partners</note>
    </ligand>
</feature>
<feature type="binding site" evidence="1">
    <location>
        <position position="244"/>
    </location>
    <ligand>
        <name>substrate</name>
        <note>ligand shared between dimeric partners</note>
    </ligand>
</feature>
<feature type="binding site" description="in other chain" evidence="1">
    <location>
        <begin position="250"/>
        <end position="253"/>
    </location>
    <ligand>
        <name>substrate</name>
        <note>ligand shared between dimeric partners</note>
    </ligand>
</feature>
<name>PFKA_VIBPA</name>
<organism>
    <name type="scientific">Vibrio parahaemolyticus serotype O3:K6 (strain RIMD 2210633)</name>
    <dbReference type="NCBI Taxonomy" id="223926"/>
    <lineage>
        <taxon>Bacteria</taxon>
        <taxon>Pseudomonadati</taxon>
        <taxon>Pseudomonadota</taxon>
        <taxon>Gammaproteobacteria</taxon>
        <taxon>Vibrionales</taxon>
        <taxon>Vibrionaceae</taxon>
        <taxon>Vibrio</taxon>
    </lineage>
</organism>
<sequence length="320" mass="34583">MIKKIGVLTSGGDAPGMNAAIRGVVRTALSEGLEVFGVYDGYLGLYEGRIEKLDRSSVSDVINKGGTFLGSARFPEFKQVEVREKAIENLKKHGIDALVVIGGDGSYMGAKKLTEMGYPCIGLPGTIDNDIAGTDYTVGYLSALNTVIDAIDRLRDTSSSHQRISIVEIMGRHCGDLTLMSAIAGGCEYIITPETGLDKDKLISNIQDGIAKGKKHAIIALTELMMDANELARDIEAATGRETRATVLGHIQRGGRPTAFDRVLASRMGNYAVHLLLEGHGGRCVGIVKEQLVHHDIIDAIENMKRPVRNDLYKVAEELF</sequence>
<reference key="1">
    <citation type="journal article" date="2003" name="Lancet">
        <title>Genome sequence of Vibrio parahaemolyticus: a pathogenic mechanism distinct from that of V. cholerae.</title>
        <authorList>
            <person name="Makino K."/>
            <person name="Oshima K."/>
            <person name="Kurokawa K."/>
            <person name="Yokoyama K."/>
            <person name="Uda T."/>
            <person name="Tagomori K."/>
            <person name="Iijima Y."/>
            <person name="Najima M."/>
            <person name="Nakano M."/>
            <person name="Yamashita A."/>
            <person name="Kubota Y."/>
            <person name="Kimura S."/>
            <person name="Yasunaga T."/>
            <person name="Honda T."/>
            <person name="Shinagawa H."/>
            <person name="Hattori M."/>
            <person name="Iida T."/>
        </authorList>
    </citation>
    <scope>NUCLEOTIDE SEQUENCE [LARGE SCALE GENOMIC DNA]</scope>
    <source>
        <strain>RIMD 2210633</strain>
    </source>
</reference>
<dbReference type="EC" id="2.7.1.11" evidence="1"/>
<dbReference type="EMBL" id="BA000031">
    <property type="protein sequence ID" value="BAC61118.1"/>
    <property type="molecule type" value="Genomic_DNA"/>
</dbReference>
<dbReference type="RefSeq" id="NP_799234.1">
    <property type="nucleotide sequence ID" value="NC_004603.1"/>
</dbReference>
<dbReference type="RefSeq" id="WP_005460467.1">
    <property type="nucleotide sequence ID" value="NC_004603.1"/>
</dbReference>
<dbReference type="SMR" id="Q87KX0"/>
<dbReference type="GeneID" id="1190418"/>
<dbReference type="KEGG" id="vpa:VP2855"/>
<dbReference type="PATRIC" id="fig|223926.6.peg.2747"/>
<dbReference type="eggNOG" id="COG0205">
    <property type="taxonomic scope" value="Bacteria"/>
</dbReference>
<dbReference type="HOGENOM" id="CLU_020655_0_1_6"/>
<dbReference type="UniPathway" id="UPA00109">
    <property type="reaction ID" value="UER00182"/>
</dbReference>
<dbReference type="Proteomes" id="UP000002493">
    <property type="component" value="Chromosome 1"/>
</dbReference>
<dbReference type="GO" id="GO:0005945">
    <property type="term" value="C:6-phosphofructokinase complex"/>
    <property type="evidence" value="ECO:0007669"/>
    <property type="project" value="TreeGrafter"/>
</dbReference>
<dbReference type="GO" id="GO:0003872">
    <property type="term" value="F:6-phosphofructokinase activity"/>
    <property type="evidence" value="ECO:0007669"/>
    <property type="project" value="UniProtKB-UniRule"/>
</dbReference>
<dbReference type="GO" id="GO:0016208">
    <property type="term" value="F:AMP binding"/>
    <property type="evidence" value="ECO:0007669"/>
    <property type="project" value="TreeGrafter"/>
</dbReference>
<dbReference type="GO" id="GO:0005524">
    <property type="term" value="F:ATP binding"/>
    <property type="evidence" value="ECO:0007669"/>
    <property type="project" value="UniProtKB-KW"/>
</dbReference>
<dbReference type="GO" id="GO:0070095">
    <property type="term" value="F:fructose-6-phosphate binding"/>
    <property type="evidence" value="ECO:0007669"/>
    <property type="project" value="TreeGrafter"/>
</dbReference>
<dbReference type="GO" id="GO:0042802">
    <property type="term" value="F:identical protein binding"/>
    <property type="evidence" value="ECO:0007669"/>
    <property type="project" value="TreeGrafter"/>
</dbReference>
<dbReference type="GO" id="GO:0046872">
    <property type="term" value="F:metal ion binding"/>
    <property type="evidence" value="ECO:0007669"/>
    <property type="project" value="UniProtKB-KW"/>
</dbReference>
<dbReference type="GO" id="GO:0048029">
    <property type="term" value="F:monosaccharide binding"/>
    <property type="evidence" value="ECO:0007669"/>
    <property type="project" value="TreeGrafter"/>
</dbReference>
<dbReference type="GO" id="GO:0061621">
    <property type="term" value="P:canonical glycolysis"/>
    <property type="evidence" value="ECO:0007669"/>
    <property type="project" value="TreeGrafter"/>
</dbReference>
<dbReference type="GO" id="GO:0030388">
    <property type="term" value="P:fructose 1,6-bisphosphate metabolic process"/>
    <property type="evidence" value="ECO:0007669"/>
    <property type="project" value="TreeGrafter"/>
</dbReference>
<dbReference type="GO" id="GO:0006002">
    <property type="term" value="P:fructose 6-phosphate metabolic process"/>
    <property type="evidence" value="ECO:0007669"/>
    <property type="project" value="InterPro"/>
</dbReference>
<dbReference type="CDD" id="cd00763">
    <property type="entry name" value="Bacterial_PFK"/>
    <property type="match status" value="1"/>
</dbReference>
<dbReference type="FunFam" id="3.40.50.450:FF:000001">
    <property type="entry name" value="ATP-dependent 6-phosphofructokinase"/>
    <property type="match status" value="1"/>
</dbReference>
<dbReference type="FunFam" id="3.40.50.460:FF:000002">
    <property type="entry name" value="ATP-dependent 6-phosphofructokinase"/>
    <property type="match status" value="1"/>
</dbReference>
<dbReference type="Gene3D" id="3.40.50.450">
    <property type="match status" value="1"/>
</dbReference>
<dbReference type="Gene3D" id="3.40.50.460">
    <property type="entry name" value="Phosphofructokinase domain"/>
    <property type="match status" value="1"/>
</dbReference>
<dbReference type="HAMAP" id="MF_00339">
    <property type="entry name" value="Phosphofructokinase_I_B1"/>
    <property type="match status" value="1"/>
</dbReference>
<dbReference type="InterPro" id="IPR022953">
    <property type="entry name" value="ATP_PFK"/>
</dbReference>
<dbReference type="InterPro" id="IPR012003">
    <property type="entry name" value="ATP_PFK_prok-type"/>
</dbReference>
<dbReference type="InterPro" id="IPR012828">
    <property type="entry name" value="PFKA_ATP_prok"/>
</dbReference>
<dbReference type="InterPro" id="IPR015912">
    <property type="entry name" value="Phosphofructokinase_CS"/>
</dbReference>
<dbReference type="InterPro" id="IPR000023">
    <property type="entry name" value="Phosphofructokinase_dom"/>
</dbReference>
<dbReference type="InterPro" id="IPR035966">
    <property type="entry name" value="PKF_sf"/>
</dbReference>
<dbReference type="NCBIfam" id="TIGR02482">
    <property type="entry name" value="PFKA_ATP"/>
    <property type="match status" value="1"/>
</dbReference>
<dbReference type="NCBIfam" id="NF002872">
    <property type="entry name" value="PRK03202.1"/>
    <property type="match status" value="1"/>
</dbReference>
<dbReference type="PANTHER" id="PTHR13697:SF4">
    <property type="entry name" value="ATP-DEPENDENT 6-PHOSPHOFRUCTOKINASE"/>
    <property type="match status" value="1"/>
</dbReference>
<dbReference type="PANTHER" id="PTHR13697">
    <property type="entry name" value="PHOSPHOFRUCTOKINASE"/>
    <property type="match status" value="1"/>
</dbReference>
<dbReference type="Pfam" id="PF00365">
    <property type="entry name" value="PFK"/>
    <property type="match status" value="1"/>
</dbReference>
<dbReference type="PIRSF" id="PIRSF000532">
    <property type="entry name" value="ATP_PFK_prok"/>
    <property type="match status" value="1"/>
</dbReference>
<dbReference type="PRINTS" id="PR00476">
    <property type="entry name" value="PHFRCTKINASE"/>
</dbReference>
<dbReference type="SUPFAM" id="SSF53784">
    <property type="entry name" value="Phosphofructokinase"/>
    <property type="match status" value="1"/>
</dbReference>
<dbReference type="PROSITE" id="PS00433">
    <property type="entry name" value="PHOSPHOFRUCTOKINASE"/>
    <property type="match status" value="1"/>
</dbReference>
<comment type="function">
    <text evidence="1">Catalyzes the phosphorylation of D-fructose 6-phosphate to fructose 1,6-bisphosphate by ATP, the first committing step of glycolysis.</text>
</comment>
<comment type="catalytic activity">
    <reaction evidence="1">
        <text>beta-D-fructose 6-phosphate + ATP = beta-D-fructose 1,6-bisphosphate + ADP + H(+)</text>
        <dbReference type="Rhea" id="RHEA:16109"/>
        <dbReference type="ChEBI" id="CHEBI:15378"/>
        <dbReference type="ChEBI" id="CHEBI:30616"/>
        <dbReference type="ChEBI" id="CHEBI:32966"/>
        <dbReference type="ChEBI" id="CHEBI:57634"/>
        <dbReference type="ChEBI" id="CHEBI:456216"/>
        <dbReference type="EC" id="2.7.1.11"/>
    </reaction>
</comment>
<comment type="cofactor">
    <cofactor evidence="1">
        <name>Mg(2+)</name>
        <dbReference type="ChEBI" id="CHEBI:18420"/>
    </cofactor>
</comment>
<comment type="activity regulation">
    <text evidence="1">Allosterically activated by ADP and other diphosphonucleosides, and allosterically inhibited by phosphoenolpyruvate.</text>
</comment>
<comment type="pathway">
    <text evidence="1">Carbohydrate degradation; glycolysis; D-glyceraldehyde 3-phosphate and glycerone phosphate from D-glucose: step 3/4.</text>
</comment>
<comment type="subunit">
    <text evidence="1">Homotetramer.</text>
</comment>
<comment type="subcellular location">
    <subcellularLocation>
        <location evidence="1">Cytoplasm</location>
    </subcellularLocation>
</comment>
<comment type="similarity">
    <text evidence="1">Belongs to the phosphofructokinase type A (PFKA) family. ATP-dependent PFK group I subfamily. Prokaryotic clade 'B1' sub-subfamily.</text>
</comment>
<keyword id="KW-0021">Allosteric enzyme</keyword>
<keyword id="KW-0067">ATP-binding</keyword>
<keyword id="KW-0963">Cytoplasm</keyword>
<keyword id="KW-0324">Glycolysis</keyword>
<keyword id="KW-0418">Kinase</keyword>
<keyword id="KW-0460">Magnesium</keyword>
<keyword id="KW-0479">Metal-binding</keyword>
<keyword id="KW-0547">Nucleotide-binding</keyword>
<keyword id="KW-0808">Transferase</keyword>
<protein>
    <recommendedName>
        <fullName evidence="1">ATP-dependent 6-phosphofructokinase</fullName>
        <shortName evidence="1">ATP-PFK</shortName>
        <shortName evidence="1">Phosphofructokinase</shortName>
        <ecNumber evidence="1">2.7.1.11</ecNumber>
    </recommendedName>
    <alternativeName>
        <fullName evidence="1">Phosphohexokinase</fullName>
    </alternativeName>
</protein>
<evidence type="ECO:0000255" key="1">
    <source>
        <dbReference type="HAMAP-Rule" id="MF_00339"/>
    </source>
</evidence>
<accession>Q87KX0</accession>
<proteinExistence type="inferred from homology"/>